<name>BPIB2_MOUSE</name>
<accession>Q8C1E1</accession>
<accession>Q3TUY4</accession>
<accession>Q8BVZ0</accession>
<accession>Q8C1E2</accession>
<accession>Q9D713</accession>
<accession>Q9D744</accession>
<sequence>MARACSLGLLLLLLLLLRTVVTVSLPVIVVRLNKAALDYVSDIGKAPLQRALQVTISDFMDPSGEVLQSTRVQILDAHVPFFYLKFIAGFGVHLSAAANFTIKVFSVPEPMELVLPVDLLADVHVARDSIGTLVLSVPACSSIFSPAGMLDGSISTSQELLDRVQEHIKADLNNKLCLHVYGLVQDLNVHLGTLIGLSPVGPESQIRYSITSMPTITSNYISLDIGAILSLLGKPILLPMHGAHPFVLPWPLGDAGAMATVGLSQHLFDCALLMLQKAGSLNLEITGQLNSKNNPLNTSVLGQLIPEVAHLFPEPTPLVLKVQLGATPVVTLHTSNSTLQLQPLVEVFAAPSNLALQFLFSLDVMVNLDLQLSVSKAKLRGSTSLLGGFQLSVATSNVGSVDMDQVLTLISTVFQKPLLDHLNALLGMGVVLPRVHNLHYVHSEVLVREGYVVVSSGLAYQH</sequence>
<gene>
    <name type="primary">Bpifb2</name>
    <name type="synonym">Bpil1</name>
</gene>
<reference key="1">
    <citation type="journal article" date="2005" name="Science">
        <title>The transcriptional landscape of the mammalian genome.</title>
        <authorList>
            <person name="Carninci P."/>
            <person name="Kasukawa T."/>
            <person name="Katayama S."/>
            <person name="Gough J."/>
            <person name="Frith M.C."/>
            <person name="Maeda N."/>
            <person name="Oyama R."/>
            <person name="Ravasi T."/>
            <person name="Lenhard B."/>
            <person name="Wells C."/>
            <person name="Kodzius R."/>
            <person name="Shimokawa K."/>
            <person name="Bajic V.B."/>
            <person name="Brenner S.E."/>
            <person name="Batalov S."/>
            <person name="Forrest A.R."/>
            <person name="Zavolan M."/>
            <person name="Davis M.J."/>
            <person name="Wilming L.G."/>
            <person name="Aidinis V."/>
            <person name="Allen J.E."/>
            <person name="Ambesi-Impiombato A."/>
            <person name="Apweiler R."/>
            <person name="Aturaliya R.N."/>
            <person name="Bailey T.L."/>
            <person name="Bansal M."/>
            <person name="Baxter L."/>
            <person name="Beisel K.W."/>
            <person name="Bersano T."/>
            <person name="Bono H."/>
            <person name="Chalk A.M."/>
            <person name="Chiu K.P."/>
            <person name="Choudhary V."/>
            <person name="Christoffels A."/>
            <person name="Clutterbuck D.R."/>
            <person name="Crowe M.L."/>
            <person name="Dalla E."/>
            <person name="Dalrymple B.P."/>
            <person name="de Bono B."/>
            <person name="Della Gatta G."/>
            <person name="di Bernardo D."/>
            <person name="Down T."/>
            <person name="Engstrom P."/>
            <person name="Fagiolini M."/>
            <person name="Faulkner G."/>
            <person name="Fletcher C.F."/>
            <person name="Fukushima T."/>
            <person name="Furuno M."/>
            <person name="Futaki S."/>
            <person name="Gariboldi M."/>
            <person name="Georgii-Hemming P."/>
            <person name="Gingeras T.R."/>
            <person name="Gojobori T."/>
            <person name="Green R.E."/>
            <person name="Gustincich S."/>
            <person name="Harbers M."/>
            <person name="Hayashi Y."/>
            <person name="Hensch T.K."/>
            <person name="Hirokawa N."/>
            <person name="Hill D."/>
            <person name="Huminiecki L."/>
            <person name="Iacono M."/>
            <person name="Ikeo K."/>
            <person name="Iwama A."/>
            <person name="Ishikawa T."/>
            <person name="Jakt M."/>
            <person name="Kanapin A."/>
            <person name="Katoh M."/>
            <person name="Kawasawa Y."/>
            <person name="Kelso J."/>
            <person name="Kitamura H."/>
            <person name="Kitano H."/>
            <person name="Kollias G."/>
            <person name="Krishnan S.P."/>
            <person name="Kruger A."/>
            <person name="Kummerfeld S.K."/>
            <person name="Kurochkin I.V."/>
            <person name="Lareau L.F."/>
            <person name="Lazarevic D."/>
            <person name="Lipovich L."/>
            <person name="Liu J."/>
            <person name="Liuni S."/>
            <person name="McWilliam S."/>
            <person name="Madan Babu M."/>
            <person name="Madera M."/>
            <person name="Marchionni L."/>
            <person name="Matsuda H."/>
            <person name="Matsuzawa S."/>
            <person name="Miki H."/>
            <person name="Mignone F."/>
            <person name="Miyake S."/>
            <person name="Morris K."/>
            <person name="Mottagui-Tabar S."/>
            <person name="Mulder N."/>
            <person name="Nakano N."/>
            <person name="Nakauchi H."/>
            <person name="Ng P."/>
            <person name="Nilsson R."/>
            <person name="Nishiguchi S."/>
            <person name="Nishikawa S."/>
            <person name="Nori F."/>
            <person name="Ohara O."/>
            <person name="Okazaki Y."/>
            <person name="Orlando V."/>
            <person name="Pang K.C."/>
            <person name="Pavan W.J."/>
            <person name="Pavesi G."/>
            <person name="Pesole G."/>
            <person name="Petrovsky N."/>
            <person name="Piazza S."/>
            <person name="Reed J."/>
            <person name="Reid J.F."/>
            <person name="Ring B.Z."/>
            <person name="Ringwald M."/>
            <person name="Rost B."/>
            <person name="Ruan Y."/>
            <person name="Salzberg S.L."/>
            <person name="Sandelin A."/>
            <person name="Schneider C."/>
            <person name="Schoenbach C."/>
            <person name="Sekiguchi K."/>
            <person name="Semple C.A."/>
            <person name="Seno S."/>
            <person name="Sessa L."/>
            <person name="Sheng Y."/>
            <person name="Shibata Y."/>
            <person name="Shimada H."/>
            <person name="Shimada K."/>
            <person name="Silva D."/>
            <person name="Sinclair B."/>
            <person name="Sperling S."/>
            <person name="Stupka E."/>
            <person name="Sugiura K."/>
            <person name="Sultana R."/>
            <person name="Takenaka Y."/>
            <person name="Taki K."/>
            <person name="Tammoja K."/>
            <person name="Tan S.L."/>
            <person name="Tang S."/>
            <person name="Taylor M.S."/>
            <person name="Tegner J."/>
            <person name="Teichmann S.A."/>
            <person name="Ueda H.R."/>
            <person name="van Nimwegen E."/>
            <person name="Verardo R."/>
            <person name="Wei C.L."/>
            <person name="Yagi K."/>
            <person name="Yamanishi H."/>
            <person name="Zabarovsky E."/>
            <person name="Zhu S."/>
            <person name="Zimmer A."/>
            <person name="Hide W."/>
            <person name="Bult C."/>
            <person name="Grimmond S.M."/>
            <person name="Teasdale R.D."/>
            <person name="Liu E.T."/>
            <person name="Brusic V."/>
            <person name="Quackenbush J."/>
            <person name="Wahlestedt C."/>
            <person name="Mattick J.S."/>
            <person name="Hume D.A."/>
            <person name="Kai C."/>
            <person name="Sasaki D."/>
            <person name="Tomaru Y."/>
            <person name="Fukuda S."/>
            <person name="Kanamori-Katayama M."/>
            <person name="Suzuki M."/>
            <person name="Aoki J."/>
            <person name="Arakawa T."/>
            <person name="Iida J."/>
            <person name="Imamura K."/>
            <person name="Itoh M."/>
            <person name="Kato T."/>
            <person name="Kawaji H."/>
            <person name="Kawagashira N."/>
            <person name="Kawashima T."/>
            <person name="Kojima M."/>
            <person name="Kondo S."/>
            <person name="Konno H."/>
            <person name="Nakano K."/>
            <person name="Ninomiya N."/>
            <person name="Nishio T."/>
            <person name="Okada M."/>
            <person name="Plessy C."/>
            <person name="Shibata K."/>
            <person name="Shiraki T."/>
            <person name="Suzuki S."/>
            <person name="Tagami M."/>
            <person name="Waki K."/>
            <person name="Watahiki A."/>
            <person name="Okamura-Oho Y."/>
            <person name="Suzuki H."/>
            <person name="Kawai J."/>
            <person name="Hayashizaki Y."/>
        </authorList>
    </citation>
    <scope>NUCLEOTIDE SEQUENCE [LARGE SCALE MRNA]</scope>
    <source>
        <strain>C57BL/6J</strain>
        <tissue>Tongue</tissue>
    </source>
</reference>
<proteinExistence type="evidence at transcript level"/>
<comment type="subcellular location">
    <subcellularLocation>
        <location evidence="1">Secreted</location>
    </subcellularLocation>
</comment>
<comment type="similarity">
    <text evidence="4">Belongs to the BPI/LBP/Plunc superfamily. BPI/LBP family.</text>
</comment>
<feature type="signal peptide" evidence="3">
    <location>
        <begin position="1"/>
        <end position="22"/>
    </location>
</feature>
<feature type="chain" id="PRO_0000017165" description="BPI fold-containing family B member 2">
    <location>
        <begin position="23"/>
        <end position="462"/>
    </location>
</feature>
<feature type="modified residue" description="Phosphothreonine" evidence="2">
    <location>
        <position position="55"/>
    </location>
</feature>
<feature type="modified residue" description="Phosphoserine" evidence="2">
    <location>
        <position position="63"/>
    </location>
</feature>
<feature type="glycosylation site" description="N-linked (GlcNAc...) asparagine" evidence="3">
    <location>
        <position position="99"/>
    </location>
</feature>
<feature type="glycosylation site" description="N-linked (GlcNAc...) asparagine" evidence="3">
    <location>
        <position position="297"/>
    </location>
</feature>
<feature type="glycosylation site" description="N-linked (GlcNAc...) asparagine" evidence="3">
    <location>
        <position position="336"/>
    </location>
</feature>
<feature type="disulfide bond" evidence="1">
    <location>
        <begin position="140"/>
        <end position="177"/>
    </location>
</feature>
<feature type="sequence conflict" description="In Ref. 1; BAC25783." evidence="4" ref="1">
    <original>Q</original>
    <variation>H</variation>
    <location>
        <position position="73"/>
    </location>
</feature>
<feature type="sequence conflict" description="In Ref. 1; BAC25783." evidence="4" ref="1">
    <original>P</original>
    <variation>T</variation>
    <location>
        <position position="108"/>
    </location>
</feature>
<feature type="sequence conflict" description="In Ref. 1; BAC25783." evidence="4" ref="1">
    <original>V</original>
    <variation>A</variation>
    <location>
        <position position="134"/>
    </location>
</feature>
<feature type="sequence conflict" description="In Ref. 1; BAB26479." evidence="4" ref="1">
    <original>I</original>
    <variation>L</variation>
    <location>
        <position position="143"/>
    </location>
</feature>
<feature type="sequence conflict" description="In Ref. 1; BAB26395." evidence="4" ref="1">
    <original>P</original>
    <variation>L</variation>
    <location>
        <position position="251"/>
    </location>
</feature>
<feature type="sequence conflict" description="In Ref. 1; BAC36021." evidence="4" ref="1">
    <original>T</original>
    <variation>P</variation>
    <location>
        <position position="412"/>
    </location>
</feature>
<feature type="sequence conflict" description="In Ref. 1; BAC36021." evidence="4" ref="1">
    <original>L</original>
    <variation>V</variation>
    <location>
        <position position="419"/>
    </location>
</feature>
<protein>
    <recommendedName>
        <fullName>BPI fold-containing family B member 2</fullName>
    </recommendedName>
    <alternativeName>
        <fullName>Bactericidal/permeability-increasing protein-like 1</fullName>
    </alternativeName>
</protein>
<evidence type="ECO:0000250" key="1"/>
<evidence type="ECO:0000250" key="2">
    <source>
        <dbReference type="UniProtKB" id="Q8N4F0"/>
    </source>
</evidence>
<evidence type="ECO:0000255" key="3"/>
<evidence type="ECO:0000305" key="4"/>
<organism>
    <name type="scientific">Mus musculus</name>
    <name type="common">Mouse</name>
    <dbReference type="NCBI Taxonomy" id="10090"/>
    <lineage>
        <taxon>Eukaryota</taxon>
        <taxon>Metazoa</taxon>
        <taxon>Chordata</taxon>
        <taxon>Craniata</taxon>
        <taxon>Vertebrata</taxon>
        <taxon>Euteleostomi</taxon>
        <taxon>Mammalia</taxon>
        <taxon>Eutheria</taxon>
        <taxon>Euarchontoglires</taxon>
        <taxon>Glires</taxon>
        <taxon>Rodentia</taxon>
        <taxon>Myomorpha</taxon>
        <taxon>Muroidea</taxon>
        <taxon>Muridae</taxon>
        <taxon>Murinae</taxon>
        <taxon>Mus</taxon>
        <taxon>Mus</taxon>
    </lineage>
</organism>
<keyword id="KW-1015">Disulfide bond</keyword>
<keyword id="KW-0325">Glycoprotein</keyword>
<keyword id="KW-0597">Phosphoprotein</keyword>
<keyword id="KW-1185">Reference proteome</keyword>
<keyword id="KW-0964">Secreted</keyword>
<keyword id="KW-0732">Signal</keyword>
<dbReference type="EMBL" id="AK009619">
    <property type="protein sequence ID" value="BAB26395.1"/>
    <property type="molecule type" value="mRNA"/>
</dbReference>
<dbReference type="EMBL" id="AK009754">
    <property type="protein sequence ID" value="BAB26479.1"/>
    <property type="molecule type" value="mRNA"/>
</dbReference>
<dbReference type="EMBL" id="AK028156">
    <property type="protein sequence ID" value="BAC25783.1"/>
    <property type="molecule type" value="mRNA"/>
</dbReference>
<dbReference type="EMBL" id="AK028158">
    <property type="protein sequence ID" value="BAC25784.1"/>
    <property type="molecule type" value="mRNA"/>
</dbReference>
<dbReference type="EMBL" id="AK075874">
    <property type="protein sequence ID" value="BAC36021.1"/>
    <property type="molecule type" value="mRNA"/>
</dbReference>
<dbReference type="EMBL" id="AK160516">
    <property type="protein sequence ID" value="BAE35837.1"/>
    <property type="molecule type" value="mRNA"/>
</dbReference>
<dbReference type="CCDS" id="CCDS16919.1"/>
<dbReference type="RefSeq" id="NP_079907.2">
    <property type="nucleotide sequence ID" value="NM_025631.3"/>
</dbReference>
<dbReference type="RefSeq" id="XP_017174674.1">
    <property type="nucleotide sequence ID" value="XM_017319185.1"/>
</dbReference>
<dbReference type="SMR" id="Q8C1E1"/>
<dbReference type="FunCoup" id="Q8C1E1">
    <property type="interactions" value="22"/>
</dbReference>
<dbReference type="STRING" id="10090.ENSMUSP00000028983"/>
<dbReference type="GlyCosmos" id="Q8C1E1">
    <property type="glycosylation" value="3 sites, No reported glycans"/>
</dbReference>
<dbReference type="GlyGen" id="Q8C1E1">
    <property type="glycosylation" value="3 sites"/>
</dbReference>
<dbReference type="PhosphoSitePlus" id="Q8C1E1"/>
<dbReference type="PaxDb" id="10090-ENSMUSP00000028983"/>
<dbReference type="ProteomicsDB" id="273795"/>
<dbReference type="Antibodypedia" id="25479">
    <property type="antibodies" value="115 antibodies from 25 providers"/>
</dbReference>
<dbReference type="DNASU" id="66557"/>
<dbReference type="Ensembl" id="ENSMUST00000028983.3">
    <property type="protein sequence ID" value="ENSMUSP00000028983.3"/>
    <property type="gene ID" value="ENSMUSG00000027481.3"/>
</dbReference>
<dbReference type="GeneID" id="66557"/>
<dbReference type="KEGG" id="mmu:66557"/>
<dbReference type="UCSC" id="uc008nin.2">
    <property type="organism name" value="mouse"/>
</dbReference>
<dbReference type="AGR" id="MGI:1913807"/>
<dbReference type="CTD" id="80341"/>
<dbReference type="MGI" id="MGI:1913807">
    <property type="gene designation" value="Bpifb2"/>
</dbReference>
<dbReference type="VEuPathDB" id="HostDB:ENSMUSG00000027481"/>
<dbReference type="eggNOG" id="KOG4160">
    <property type="taxonomic scope" value="Eukaryota"/>
</dbReference>
<dbReference type="GeneTree" id="ENSGT01100000263546"/>
<dbReference type="HOGENOM" id="CLU_597102_0_0_1"/>
<dbReference type="InParanoid" id="Q8C1E1"/>
<dbReference type="OMA" id="RYSMINA"/>
<dbReference type="OrthoDB" id="9831346at2759"/>
<dbReference type="PhylomeDB" id="Q8C1E1"/>
<dbReference type="TreeFam" id="TF315617"/>
<dbReference type="Reactome" id="R-MMU-381426">
    <property type="pathway name" value="Regulation of Insulin-like Growth Factor (IGF) transport and uptake by Insulin-like Growth Factor Binding Proteins (IGFBPs)"/>
</dbReference>
<dbReference type="Reactome" id="R-MMU-6803157">
    <property type="pathway name" value="Antimicrobial peptides"/>
</dbReference>
<dbReference type="Reactome" id="R-MMU-8957275">
    <property type="pathway name" value="Post-translational protein phosphorylation"/>
</dbReference>
<dbReference type="BioGRID-ORCS" id="66557">
    <property type="hits" value="2 hits in 77 CRISPR screens"/>
</dbReference>
<dbReference type="PRO" id="PR:Q8C1E1"/>
<dbReference type="Proteomes" id="UP000000589">
    <property type="component" value="Chromosome 2"/>
</dbReference>
<dbReference type="RNAct" id="Q8C1E1">
    <property type="molecule type" value="protein"/>
</dbReference>
<dbReference type="Bgee" id="ENSMUSG00000027481">
    <property type="expression patterns" value="Expressed in peripheral lymph node and 9 other cell types or tissues"/>
</dbReference>
<dbReference type="ExpressionAtlas" id="Q8C1E1">
    <property type="expression patterns" value="baseline and differential"/>
</dbReference>
<dbReference type="GO" id="GO:0005576">
    <property type="term" value="C:extracellular region"/>
    <property type="evidence" value="ECO:0007669"/>
    <property type="project" value="UniProtKB-SubCell"/>
</dbReference>
<dbReference type="GO" id="GO:0008289">
    <property type="term" value="F:lipid binding"/>
    <property type="evidence" value="ECO:0007669"/>
    <property type="project" value="InterPro"/>
</dbReference>
<dbReference type="Gene3D" id="3.15.10.10">
    <property type="entry name" value="Bactericidal permeability-increasing protein, domain 1"/>
    <property type="match status" value="1"/>
</dbReference>
<dbReference type="Gene3D" id="3.15.20.10">
    <property type="entry name" value="Bactericidal permeability-increasing protein, domain 2"/>
    <property type="match status" value="1"/>
</dbReference>
<dbReference type="InterPro" id="IPR017943">
    <property type="entry name" value="Bactericidal_perm-incr_a/b_dom"/>
</dbReference>
<dbReference type="InterPro" id="IPR051660">
    <property type="entry name" value="BPI_fold-BPI/LBP"/>
</dbReference>
<dbReference type="InterPro" id="IPR001124">
    <property type="entry name" value="Lipid-bd_serum_glycop_C"/>
</dbReference>
<dbReference type="InterPro" id="IPR017942">
    <property type="entry name" value="Lipid-bd_serum_glycop_N"/>
</dbReference>
<dbReference type="PANTHER" id="PTHR46019:SF1">
    <property type="entry name" value="BPI FOLD-CONTAINING FAMILY B MEMBER 2"/>
    <property type="match status" value="1"/>
</dbReference>
<dbReference type="PANTHER" id="PTHR46019">
    <property type="entry name" value="BPI FOLD-CONTAINING FAMILY B MEMBER 4-RELATED"/>
    <property type="match status" value="1"/>
</dbReference>
<dbReference type="Pfam" id="PF01273">
    <property type="entry name" value="LBP_BPI_CETP"/>
    <property type="match status" value="1"/>
</dbReference>
<dbReference type="Pfam" id="PF02886">
    <property type="entry name" value="LBP_BPI_CETP_C"/>
    <property type="match status" value="1"/>
</dbReference>
<dbReference type="SMART" id="SM00329">
    <property type="entry name" value="BPI2"/>
    <property type="match status" value="1"/>
</dbReference>
<dbReference type="SUPFAM" id="SSF55394">
    <property type="entry name" value="Bactericidal permeability-increasing protein, BPI"/>
    <property type="match status" value="2"/>
</dbReference>